<sequence length="87" mass="10637">MNGNQIKQLKKLYRHILNEASKFENINYNVYFSNKAKEKFREFCSDTNFESEKLKTFQNECWDYLNMLKRQTIIHNLYHVDKPLVNK</sequence>
<accession>Q8IEK7</accession>
<protein>
    <recommendedName>
        <fullName evidence="5">Protein Isd11</fullName>
        <shortName evidence="4">PfIsd11</shortName>
    </recommendedName>
</protein>
<evidence type="ECO:0000269" key="1">
    <source>
    </source>
</evidence>
<evidence type="ECO:0000269" key="2">
    <source>
    </source>
</evidence>
<evidence type="ECO:0000303" key="3">
    <source>
    </source>
</evidence>
<evidence type="ECO:0000303" key="4">
    <source>
    </source>
</evidence>
<evidence type="ECO:0000305" key="5"/>
<evidence type="ECO:0000312" key="6">
    <source>
        <dbReference type="EMBL" id="CAD52245.1"/>
    </source>
</evidence>
<evidence type="ECO:0000312" key="7">
    <source>
        <dbReference type="Proteomes" id="UP000001450"/>
    </source>
</evidence>
<feature type="chain" id="PRO_0000461957" description="Protein Isd11">
    <location>
        <begin position="1"/>
        <end position="87"/>
    </location>
</feature>
<organism evidence="7">
    <name type="scientific">Plasmodium falciparum (isolate 3D7)</name>
    <dbReference type="NCBI Taxonomy" id="36329"/>
    <lineage>
        <taxon>Eukaryota</taxon>
        <taxon>Sar</taxon>
        <taxon>Alveolata</taxon>
        <taxon>Apicomplexa</taxon>
        <taxon>Aconoidasida</taxon>
        <taxon>Haemosporida</taxon>
        <taxon>Plasmodiidae</taxon>
        <taxon>Plasmodium</taxon>
        <taxon>Plasmodium (Laverania)</taxon>
    </lineage>
</organism>
<reference evidence="7" key="1">
    <citation type="journal article" date="2002" name="Nature">
        <title>Genome sequence of the human malaria parasite Plasmodium falciparum.</title>
        <authorList>
            <person name="Gardner M.J."/>
            <person name="Hall N."/>
            <person name="Fung E."/>
            <person name="White O."/>
            <person name="Berriman M."/>
            <person name="Hyman R.W."/>
            <person name="Carlton J.M."/>
            <person name="Pain A."/>
            <person name="Nelson K.E."/>
            <person name="Bowman S."/>
            <person name="Paulsen I.T."/>
            <person name="James K.D."/>
            <person name="Eisen J.A."/>
            <person name="Rutherford K.M."/>
            <person name="Salzberg S.L."/>
            <person name="Craig A."/>
            <person name="Kyes S."/>
            <person name="Chan M.-S."/>
            <person name="Nene V."/>
            <person name="Shallom S.J."/>
            <person name="Suh B."/>
            <person name="Peterson J."/>
            <person name="Angiuoli S."/>
            <person name="Pertea M."/>
            <person name="Allen J."/>
            <person name="Selengut J."/>
            <person name="Haft D."/>
            <person name="Mather M.W."/>
            <person name="Vaidya A.B."/>
            <person name="Martin D.M.A."/>
            <person name="Fairlamb A.H."/>
            <person name="Fraunholz M.J."/>
            <person name="Roos D.S."/>
            <person name="Ralph S.A."/>
            <person name="McFadden G.I."/>
            <person name="Cummings L.M."/>
            <person name="Subramanian G.M."/>
            <person name="Mungall C."/>
            <person name="Venter J.C."/>
            <person name="Carucci D.J."/>
            <person name="Hoffman S.L."/>
            <person name="Newbold C."/>
            <person name="Davis R.W."/>
            <person name="Fraser C.M."/>
            <person name="Barrell B.G."/>
        </authorList>
    </citation>
    <scope>NUCLEOTIDE SEQUENCE [LARGE SCALE GENOMIC DNA]</scope>
    <source>
        <strain evidence="7">3D7</strain>
    </source>
</reference>
<reference evidence="7" key="2">
    <citation type="journal article" date="2002" name="Nature">
        <title>Sequence of Plasmodium falciparum chromosomes 1, 3-9 and 13.</title>
        <authorList>
            <person name="Hall N."/>
            <person name="Pain A."/>
            <person name="Berriman M."/>
            <person name="Churcher C.M."/>
            <person name="Harris B."/>
            <person name="Harris D."/>
            <person name="Mungall K.L."/>
            <person name="Bowman S."/>
            <person name="Atkin R."/>
            <person name="Baker S."/>
            <person name="Barron A."/>
            <person name="Brooks K."/>
            <person name="Buckee C.O."/>
            <person name="Burrows C."/>
            <person name="Cherevach I."/>
            <person name="Chillingworth C."/>
            <person name="Chillingworth T."/>
            <person name="Christodoulou Z."/>
            <person name="Clark L."/>
            <person name="Clark R."/>
            <person name="Corton C."/>
            <person name="Cronin A."/>
            <person name="Davies R.M."/>
            <person name="Davis P."/>
            <person name="Dear P."/>
            <person name="Dearden F."/>
            <person name="Doggett J."/>
            <person name="Feltwell T."/>
            <person name="Goble A."/>
            <person name="Goodhead I."/>
            <person name="Gwilliam R."/>
            <person name="Hamlin N."/>
            <person name="Hance Z."/>
            <person name="Harper D."/>
            <person name="Hauser H."/>
            <person name="Hornsby T."/>
            <person name="Holroyd S."/>
            <person name="Horrocks P."/>
            <person name="Humphray S."/>
            <person name="Jagels K."/>
            <person name="James K.D."/>
            <person name="Johnson D."/>
            <person name="Kerhornou A."/>
            <person name="Knights A."/>
            <person name="Konfortov B."/>
            <person name="Kyes S."/>
            <person name="Larke N."/>
            <person name="Lawson D."/>
            <person name="Lennard N."/>
            <person name="Line A."/>
            <person name="Maddison M."/>
            <person name="Mclean J."/>
            <person name="Mooney P."/>
            <person name="Moule S."/>
            <person name="Murphy L."/>
            <person name="Oliver K."/>
            <person name="Ormond D."/>
            <person name="Price C."/>
            <person name="Quail M.A."/>
            <person name="Rabbinowitsch E."/>
            <person name="Rajandream M.A."/>
            <person name="Rutter S."/>
            <person name="Rutherford K.M."/>
            <person name="Sanders M."/>
            <person name="Simmonds M."/>
            <person name="Seeger K."/>
            <person name="Sharp S."/>
            <person name="Smith R."/>
            <person name="Squares R."/>
            <person name="Squares S."/>
            <person name="Stevens K."/>
            <person name="Taylor K."/>
            <person name="Tivey A."/>
            <person name="Unwin L."/>
            <person name="Whitehead S."/>
            <person name="Woodward J.R."/>
            <person name="Sulston J.E."/>
            <person name="Craig A."/>
            <person name="Newbold C."/>
            <person name="Barrell B.G."/>
        </authorList>
    </citation>
    <scope>NUCLEOTIDE SEQUENCE [LARGE SCALE GENOMIC DNA]</scope>
    <source>
        <strain evidence="7">3D7</strain>
    </source>
</reference>
<reference evidence="5" key="3">
    <citation type="journal article" date="2013" name="PLoS Pathog.">
        <title>The suf iron-sulfur cluster synthesis pathway is required for apicoplast maintenance in malaria parasites.</title>
        <authorList>
            <person name="Gisselberg J.E."/>
            <person name="Dellibovi-Ragheb T.A."/>
            <person name="Matthews K.A."/>
            <person name="Bosch G."/>
            <person name="Prigge S.T."/>
        </authorList>
    </citation>
    <scope>SUBCELLULAR LOCATION</scope>
</reference>
<reference evidence="5" key="4">
    <citation type="journal article" date="2021" name="Mol. Microbiol.">
        <title>[Fe-S] biogenesis and unusual assembly of the ISC scaffold complex in the Plasmodium falciparum mitochondrion.</title>
        <authorList>
            <person name="Sadik M."/>
            <person name="Afsar M."/>
            <person name="Ramachandran R."/>
            <person name="Habib S."/>
        </authorList>
    </citation>
    <scope>FUNCTION</scope>
    <scope>INTERACTION WITH ISCS</scope>
</reference>
<proteinExistence type="evidence at protein level"/>
<dbReference type="EMBL" id="AL844509">
    <property type="protein sequence ID" value="CAD52245.1"/>
    <property type="molecule type" value="Genomic_DNA"/>
</dbReference>
<dbReference type="RefSeq" id="XP_001349838.1">
    <property type="nucleotide sequence ID" value="XM_001349802.1"/>
</dbReference>
<dbReference type="SASBDB" id="Q8IEK7"/>
<dbReference type="SMR" id="Q8IEK7"/>
<dbReference type="FunCoup" id="Q8IEK7">
    <property type="interactions" value="137"/>
</dbReference>
<dbReference type="STRING" id="36329.Q8IEK7"/>
<dbReference type="PaxDb" id="5833-MAL13P1.53"/>
<dbReference type="EnsemblProtists" id="CAD52245">
    <property type="protein sequence ID" value="CAD52245"/>
    <property type="gene ID" value="PF3D7_1311000"/>
</dbReference>
<dbReference type="GeneID" id="813942"/>
<dbReference type="KEGG" id="pfa:PF3D7_1311000"/>
<dbReference type="VEuPathDB" id="PlasmoDB:PF3D7_1311000"/>
<dbReference type="HOGENOM" id="CLU_120076_2_1_1"/>
<dbReference type="InParanoid" id="Q8IEK7"/>
<dbReference type="OMA" id="HNMYHVD"/>
<dbReference type="OrthoDB" id="238851at2759"/>
<dbReference type="PhylomeDB" id="Q8IEK7"/>
<dbReference type="Reactome" id="R-PFA-1362409">
    <property type="pathway name" value="Mitochondrial iron-sulfur cluster biogenesis"/>
</dbReference>
<dbReference type="UniPathway" id="UPA00266"/>
<dbReference type="Proteomes" id="UP000001450">
    <property type="component" value="Chromosome 13"/>
</dbReference>
<dbReference type="GO" id="GO:1990221">
    <property type="term" value="C:L-cysteine desulfurase complex"/>
    <property type="evidence" value="ECO:0000318"/>
    <property type="project" value="GO_Central"/>
</dbReference>
<dbReference type="GO" id="GO:0005739">
    <property type="term" value="C:mitochondrion"/>
    <property type="evidence" value="ECO:0000314"/>
    <property type="project" value="GeneDB"/>
</dbReference>
<dbReference type="GO" id="GO:0031071">
    <property type="term" value="F:cysteine desulfurase activity"/>
    <property type="evidence" value="ECO:0007669"/>
    <property type="project" value="UniProtKB-EC"/>
</dbReference>
<dbReference type="GO" id="GO:0016226">
    <property type="term" value="P:iron-sulfur cluster assembly"/>
    <property type="evidence" value="ECO:0000318"/>
    <property type="project" value="GO_Central"/>
</dbReference>
<dbReference type="CDD" id="cd20264">
    <property type="entry name" value="Complex1_LYR_LYRM4"/>
    <property type="match status" value="1"/>
</dbReference>
<dbReference type="InterPro" id="IPR008011">
    <property type="entry name" value="Complex1_LYR_dom"/>
</dbReference>
<dbReference type="InterPro" id="IPR045297">
    <property type="entry name" value="Complex1_LYR_LYRM4"/>
</dbReference>
<dbReference type="InterPro" id="IPR051522">
    <property type="entry name" value="ISC_assembly_LYR"/>
</dbReference>
<dbReference type="PANTHER" id="PTHR13166:SF7">
    <property type="entry name" value="LYR MOTIF-CONTAINING PROTEIN 4"/>
    <property type="match status" value="1"/>
</dbReference>
<dbReference type="PANTHER" id="PTHR13166">
    <property type="entry name" value="PROTEIN C6ORF149"/>
    <property type="match status" value="1"/>
</dbReference>
<dbReference type="Pfam" id="PF05347">
    <property type="entry name" value="Complex1_LYR"/>
    <property type="match status" value="1"/>
</dbReference>
<name>ISD11_PLAF7</name>
<comment type="function">
    <text evidence="2">Participates in iron-sulfur cluster formation (ISC) pathway for iron-sulfur (Fe-S) cluster biogenesis (PubMed:34032321). Enhances cysteine desulfurase activity of IscS (PubMed:34032321).</text>
</comment>
<comment type="pathway">
    <text evidence="5">Cofactor biosynthesis; iron-sulfur cluster biosynthesis.</text>
</comment>
<comment type="subunit">
    <text evidence="2">Interacts with IscS; the interaction enhances cysteine desulfurase activity of IscS (PubMed:34032321). Component of a complex, at least composed of IscS, Isd11 and IscU (PubMed:34032321).</text>
</comment>
<comment type="subcellular location">
    <subcellularLocation>
        <location evidence="1">Mitochondrion</location>
    </subcellularLocation>
</comment>
<comment type="similarity">
    <text evidence="5">Belongs to the complex I LYR family.</text>
</comment>
<gene>
    <name evidence="3 4" type="primary">Isd11</name>
    <name evidence="6" type="ORF">PF3D7_1311000</name>
</gene>
<keyword id="KW-0496">Mitochondrion</keyword>
<keyword id="KW-1185">Reference proteome</keyword>
<keyword id="KW-0808">Transferase</keyword>